<name>NRDR_SHIB3</name>
<gene>
    <name evidence="1" type="primary">nrdR</name>
    <name type="ordered locus">SbBS512_E0334</name>
</gene>
<accession>B2U4L6</accession>
<sequence length="149" mass="17157">MHCPFCFAVDTKVIDSRLVGGGSSVRRRRQCLVCNERFTTFEVAELVMPRVVKSNDVREPFNEEKLRSGMLRALEKRPVSSDDVEMAINHIKSQLRATGEREVPSKMIGNLVMEQLKKLDKVAYIRFASVYRSFEDIKEFGEEIARLED</sequence>
<proteinExistence type="inferred from homology"/>
<organism>
    <name type="scientific">Shigella boydii serotype 18 (strain CDC 3083-94 / BS512)</name>
    <dbReference type="NCBI Taxonomy" id="344609"/>
    <lineage>
        <taxon>Bacteria</taxon>
        <taxon>Pseudomonadati</taxon>
        <taxon>Pseudomonadota</taxon>
        <taxon>Gammaproteobacteria</taxon>
        <taxon>Enterobacterales</taxon>
        <taxon>Enterobacteriaceae</taxon>
        <taxon>Shigella</taxon>
    </lineage>
</organism>
<evidence type="ECO:0000255" key="1">
    <source>
        <dbReference type="HAMAP-Rule" id="MF_00440"/>
    </source>
</evidence>
<feature type="chain" id="PRO_1000124550" description="Transcriptional repressor NrdR">
    <location>
        <begin position="1"/>
        <end position="149"/>
    </location>
</feature>
<feature type="domain" description="ATP-cone" evidence="1">
    <location>
        <begin position="49"/>
        <end position="139"/>
    </location>
</feature>
<feature type="zinc finger region" evidence="1">
    <location>
        <begin position="3"/>
        <end position="34"/>
    </location>
</feature>
<protein>
    <recommendedName>
        <fullName evidence="1">Transcriptional repressor NrdR</fullName>
    </recommendedName>
</protein>
<comment type="function">
    <text evidence="1">Negatively regulates transcription of bacterial ribonucleotide reductase nrd genes and operons by binding to NrdR-boxes.</text>
</comment>
<comment type="cofactor">
    <cofactor evidence="1">
        <name>Zn(2+)</name>
        <dbReference type="ChEBI" id="CHEBI:29105"/>
    </cofactor>
    <text evidence="1">Binds 1 zinc ion.</text>
</comment>
<comment type="similarity">
    <text evidence="1">Belongs to the NrdR family.</text>
</comment>
<reference key="1">
    <citation type="submission" date="2008-05" db="EMBL/GenBank/DDBJ databases">
        <title>Complete sequence of Shigella boydii serotype 18 strain BS512.</title>
        <authorList>
            <person name="Rasko D.A."/>
            <person name="Rosovitz M."/>
            <person name="Maurelli A.T."/>
            <person name="Myers G."/>
            <person name="Seshadri R."/>
            <person name="Cer R."/>
            <person name="Jiang L."/>
            <person name="Ravel J."/>
            <person name="Sebastian Y."/>
        </authorList>
    </citation>
    <scope>NUCLEOTIDE SEQUENCE [LARGE SCALE GENOMIC DNA]</scope>
    <source>
        <strain>CDC 3083-94 / BS512</strain>
    </source>
</reference>
<dbReference type="EMBL" id="CP001063">
    <property type="protein sequence ID" value="ACD07694.1"/>
    <property type="molecule type" value="Genomic_DNA"/>
</dbReference>
<dbReference type="RefSeq" id="WP_000543540.1">
    <property type="nucleotide sequence ID" value="NC_010658.1"/>
</dbReference>
<dbReference type="SMR" id="B2U4L6"/>
<dbReference type="STRING" id="344609.SbBS512_E0334"/>
<dbReference type="KEGG" id="sbc:SbBS512_E0334"/>
<dbReference type="HOGENOM" id="CLU_108412_0_0_6"/>
<dbReference type="Proteomes" id="UP000001030">
    <property type="component" value="Chromosome"/>
</dbReference>
<dbReference type="GO" id="GO:0005524">
    <property type="term" value="F:ATP binding"/>
    <property type="evidence" value="ECO:0007669"/>
    <property type="project" value="UniProtKB-KW"/>
</dbReference>
<dbReference type="GO" id="GO:0003677">
    <property type="term" value="F:DNA binding"/>
    <property type="evidence" value="ECO:0007669"/>
    <property type="project" value="UniProtKB-KW"/>
</dbReference>
<dbReference type="GO" id="GO:0008270">
    <property type="term" value="F:zinc ion binding"/>
    <property type="evidence" value="ECO:0007669"/>
    <property type="project" value="UniProtKB-UniRule"/>
</dbReference>
<dbReference type="GO" id="GO:0045892">
    <property type="term" value="P:negative regulation of DNA-templated transcription"/>
    <property type="evidence" value="ECO:0007669"/>
    <property type="project" value="UniProtKB-UniRule"/>
</dbReference>
<dbReference type="HAMAP" id="MF_00440">
    <property type="entry name" value="NrdR"/>
    <property type="match status" value="1"/>
</dbReference>
<dbReference type="InterPro" id="IPR005144">
    <property type="entry name" value="ATP-cone_dom"/>
</dbReference>
<dbReference type="InterPro" id="IPR055173">
    <property type="entry name" value="NrdR-like_N"/>
</dbReference>
<dbReference type="InterPro" id="IPR003796">
    <property type="entry name" value="RNR_NrdR-like"/>
</dbReference>
<dbReference type="NCBIfam" id="TIGR00244">
    <property type="entry name" value="transcriptional regulator NrdR"/>
    <property type="match status" value="1"/>
</dbReference>
<dbReference type="PANTHER" id="PTHR30455">
    <property type="entry name" value="TRANSCRIPTIONAL REPRESSOR NRDR"/>
    <property type="match status" value="1"/>
</dbReference>
<dbReference type="PANTHER" id="PTHR30455:SF2">
    <property type="entry name" value="TRANSCRIPTIONAL REPRESSOR NRDR"/>
    <property type="match status" value="1"/>
</dbReference>
<dbReference type="Pfam" id="PF03477">
    <property type="entry name" value="ATP-cone"/>
    <property type="match status" value="1"/>
</dbReference>
<dbReference type="Pfam" id="PF22811">
    <property type="entry name" value="Zn_ribbon_NrdR"/>
    <property type="match status" value="1"/>
</dbReference>
<dbReference type="PROSITE" id="PS51161">
    <property type="entry name" value="ATP_CONE"/>
    <property type="match status" value="1"/>
</dbReference>
<keyword id="KW-0067">ATP-binding</keyword>
<keyword id="KW-0238">DNA-binding</keyword>
<keyword id="KW-0479">Metal-binding</keyword>
<keyword id="KW-0547">Nucleotide-binding</keyword>
<keyword id="KW-1185">Reference proteome</keyword>
<keyword id="KW-0678">Repressor</keyword>
<keyword id="KW-0804">Transcription</keyword>
<keyword id="KW-0805">Transcription regulation</keyword>
<keyword id="KW-0862">Zinc</keyword>
<keyword id="KW-0863">Zinc-finger</keyword>